<dbReference type="EC" id="7.1.1.2" evidence="1"/>
<dbReference type="EMBL" id="AJ639866">
    <property type="protein sequence ID" value="CAG26343.1"/>
    <property type="molecule type" value="Genomic_DNA"/>
</dbReference>
<dbReference type="RefSeq" id="YP_161170.1">
    <property type="nucleotide sequence ID" value="NC_006516.1"/>
</dbReference>
<dbReference type="SMR" id="Q5QSA4"/>
<dbReference type="GeneID" id="3187198"/>
<dbReference type="CTD" id="4536"/>
<dbReference type="GO" id="GO:0005743">
    <property type="term" value="C:mitochondrial inner membrane"/>
    <property type="evidence" value="ECO:0000250"/>
    <property type="project" value="UniProtKB"/>
</dbReference>
<dbReference type="GO" id="GO:0008137">
    <property type="term" value="F:NADH dehydrogenase (ubiquinone) activity"/>
    <property type="evidence" value="ECO:0000250"/>
    <property type="project" value="UniProtKB"/>
</dbReference>
<dbReference type="GO" id="GO:0006120">
    <property type="term" value="P:mitochondrial electron transport, NADH to ubiquinone"/>
    <property type="evidence" value="ECO:0000250"/>
    <property type="project" value="UniProtKB"/>
</dbReference>
<dbReference type="GO" id="GO:0032981">
    <property type="term" value="P:mitochondrial respiratory chain complex I assembly"/>
    <property type="evidence" value="ECO:0000250"/>
    <property type="project" value="UniProtKB"/>
</dbReference>
<dbReference type="InterPro" id="IPR050175">
    <property type="entry name" value="Complex_I_Subunit_2"/>
</dbReference>
<dbReference type="InterPro" id="IPR010933">
    <property type="entry name" value="NADH_DH_su2_C"/>
</dbReference>
<dbReference type="InterPro" id="IPR003917">
    <property type="entry name" value="NADH_UbQ_OxRdtase_chain2"/>
</dbReference>
<dbReference type="InterPro" id="IPR001750">
    <property type="entry name" value="ND/Mrp_TM"/>
</dbReference>
<dbReference type="PANTHER" id="PTHR46552">
    <property type="entry name" value="NADH-UBIQUINONE OXIDOREDUCTASE CHAIN 2"/>
    <property type="match status" value="1"/>
</dbReference>
<dbReference type="PANTHER" id="PTHR46552:SF1">
    <property type="entry name" value="NADH-UBIQUINONE OXIDOREDUCTASE CHAIN 2"/>
    <property type="match status" value="1"/>
</dbReference>
<dbReference type="Pfam" id="PF06444">
    <property type="entry name" value="NADH_dehy_S2_C"/>
    <property type="match status" value="1"/>
</dbReference>
<dbReference type="Pfam" id="PF00361">
    <property type="entry name" value="Proton_antipo_M"/>
    <property type="match status" value="1"/>
</dbReference>
<dbReference type="PRINTS" id="PR01436">
    <property type="entry name" value="NADHDHGNASE2"/>
</dbReference>
<evidence type="ECO:0000250" key="1">
    <source>
        <dbReference type="UniProtKB" id="P03891"/>
    </source>
</evidence>
<evidence type="ECO:0000250" key="2">
    <source>
        <dbReference type="UniProtKB" id="P03892"/>
    </source>
</evidence>
<evidence type="ECO:0000255" key="3"/>
<evidence type="ECO:0000305" key="4"/>
<geneLocation type="mitochondrion"/>
<keyword id="KW-0249">Electron transport</keyword>
<keyword id="KW-0472">Membrane</keyword>
<keyword id="KW-0496">Mitochondrion</keyword>
<keyword id="KW-0999">Mitochondrion inner membrane</keyword>
<keyword id="KW-0520">NAD</keyword>
<keyword id="KW-0679">Respiratory chain</keyword>
<keyword id="KW-1278">Translocase</keyword>
<keyword id="KW-0812">Transmembrane</keyword>
<keyword id="KW-1133">Transmembrane helix</keyword>
<keyword id="KW-0813">Transport</keyword>
<keyword id="KW-0830">Ubiquinone</keyword>
<name>NU2M_METNU</name>
<organism>
    <name type="scientific">Metachirus nudicaudatus</name>
    <name type="common">Brown four-eyed opossum</name>
    <dbReference type="NCBI Taxonomy" id="42725"/>
    <lineage>
        <taxon>Eukaryota</taxon>
        <taxon>Metazoa</taxon>
        <taxon>Chordata</taxon>
        <taxon>Craniata</taxon>
        <taxon>Vertebrata</taxon>
        <taxon>Euteleostomi</taxon>
        <taxon>Mammalia</taxon>
        <taxon>Metatheria</taxon>
        <taxon>Didelphimorphia</taxon>
        <taxon>Didelphidae</taxon>
        <taxon>Metachirus</taxon>
    </lineage>
</organism>
<comment type="function">
    <text evidence="1">Core subunit of the mitochondrial membrane respiratory chain NADH dehydrogenase (Complex I) which catalyzes electron transfer from NADH through the respiratory chain, using ubiquinone as an electron acceptor. Essential for the catalytic activity and assembly of complex I.</text>
</comment>
<comment type="catalytic activity">
    <reaction evidence="1">
        <text>a ubiquinone + NADH + 5 H(+)(in) = a ubiquinol + NAD(+) + 4 H(+)(out)</text>
        <dbReference type="Rhea" id="RHEA:29091"/>
        <dbReference type="Rhea" id="RHEA-COMP:9565"/>
        <dbReference type="Rhea" id="RHEA-COMP:9566"/>
        <dbReference type="ChEBI" id="CHEBI:15378"/>
        <dbReference type="ChEBI" id="CHEBI:16389"/>
        <dbReference type="ChEBI" id="CHEBI:17976"/>
        <dbReference type="ChEBI" id="CHEBI:57540"/>
        <dbReference type="ChEBI" id="CHEBI:57945"/>
        <dbReference type="EC" id="7.1.1.2"/>
    </reaction>
</comment>
<comment type="subunit">
    <text evidence="1 2">Core subunit of respiratory chain NADH dehydrogenase (Complex I) which is composed of 45 different subunits. Interacts with TMEM242 (By similarity).</text>
</comment>
<comment type="subcellular location">
    <subcellularLocation>
        <location evidence="2">Mitochondrion inner membrane</location>
        <topology evidence="3">Multi-pass membrane protein</topology>
    </subcellularLocation>
</comment>
<comment type="similarity">
    <text evidence="4">Belongs to the complex I subunit 2 family.</text>
</comment>
<sequence length="347" mass="38669">MSPYVLTIMSLSLLLGTTMTLISDHWLTAWMGLEINTLAVIPLMTKPHHSRSTESAIKYFMIQATASMIILFSAIFNASTTNQWITGQISNTSASFMMTIALAMKLGLAPFHFWVPEVTQGIPLLSGMILLTWQKIAPISIFYQISPSLNMSLLMILSITSTLLGGWGGLNQTQLRKILAYSSIAHMGWMTIIIMIYPSLTILNLILYLASTITMFMVLNQSSSTKINSLSILWNKSAPNMIIITLTLLSLGGLPPLTGFMPKWLILQELINFNNIPLAMMLALSTLLNLFFYMRIIYSSTLTMFPSINNTKLQWALYSHKTILPIPTLTIISSLLLPMTPMFITLS</sequence>
<gene>
    <name evidence="1" type="primary">MT-ND2</name>
    <name type="synonym">MTND2</name>
    <name type="synonym">NADH2</name>
    <name type="synonym">ND2</name>
</gene>
<proteinExistence type="inferred from homology"/>
<reference key="1">
    <citation type="journal article" date="2004" name="Gene">
        <title>Marsupial relationships and a timeline for marsupial radiation in South Gondwana.</title>
        <authorList>
            <person name="Nilsson M.A."/>
            <person name="Arnason U."/>
            <person name="Spencer P.B.S."/>
            <person name="Janke A."/>
        </authorList>
    </citation>
    <scope>NUCLEOTIDE SEQUENCE [GENOMIC DNA]</scope>
</reference>
<protein>
    <recommendedName>
        <fullName evidence="1">NADH-ubiquinone oxidoreductase chain 2</fullName>
        <ecNumber evidence="1">7.1.1.2</ecNumber>
    </recommendedName>
    <alternativeName>
        <fullName>NADH dehydrogenase subunit 2</fullName>
    </alternativeName>
</protein>
<accession>Q5QSA4</accession>
<feature type="chain" id="PRO_0000256667" description="NADH-ubiquinone oxidoreductase chain 2">
    <location>
        <begin position="1"/>
        <end position="347"/>
    </location>
</feature>
<feature type="transmembrane region" description="Helical" evidence="3">
    <location>
        <begin position="2"/>
        <end position="22"/>
    </location>
</feature>
<feature type="transmembrane region" description="Helical" evidence="3">
    <location>
        <begin position="25"/>
        <end position="45"/>
    </location>
</feature>
<feature type="transmembrane region" description="Helical" evidence="3">
    <location>
        <begin position="56"/>
        <end position="76"/>
    </location>
</feature>
<feature type="transmembrane region" description="Helical" evidence="3">
    <location>
        <begin position="96"/>
        <end position="116"/>
    </location>
</feature>
<feature type="transmembrane region" description="Helical" evidence="3">
    <location>
        <begin position="122"/>
        <end position="142"/>
    </location>
</feature>
<feature type="transmembrane region" description="Helical" evidence="3">
    <location>
        <begin position="149"/>
        <end position="169"/>
    </location>
</feature>
<feature type="transmembrane region" description="Helical" evidence="3">
    <location>
        <begin position="178"/>
        <end position="197"/>
    </location>
</feature>
<feature type="transmembrane region" description="Helical" evidence="3">
    <location>
        <begin position="202"/>
        <end position="219"/>
    </location>
</feature>
<feature type="transmembrane region" description="Helical" evidence="3">
    <location>
        <begin position="241"/>
        <end position="261"/>
    </location>
</feature>
<feature type="transmembrane region" description="Helical" evidence="3">
    <location>
        <begin position="278"/>
        <end position="298"/>
    </location>
</feature>
<feature type="transmembrane region" description="Helical" evidence="3">
    <location>
        <begin position="323"/>
        <end position="343"/>
    </location>
</feature>